<gene>
    <name evidence="1" type="primary">pyrB</name>
    <name type="ordered locus">FMG_0720</name>
</gene>
<feature type="chain" id="PRO_1000088763" description="Aspartate carbamoyltransferase catalytic subunit">
    <location>
        <begin position="1"/>
        <end position="306"/>
    </location>
</feature>
<feature type="binding site" evidence="1">
    <location>
        <position position="54"/>
    </location>
    <ligand>
        <name>carbamoyl phosphate</name>
        <dbReference type="ChEBI" id="CHEBI:58228"/>
    </ligand>
</feature>
<feature type="binding site" evidence="1">
    <location>
        <position position="55"/>
    </location>
    <ligand>
        <name>carbamoyl phosphate</name>
        <dbReference type="ChEBI" id="CHEBI:58228"/>
    </ligand>
</feature>
<feature type="binding site" evidence="1">
    <location>
        <position position="83"/>
    </location>
    <ligand>
        <name>L-aspartate</name>
        <dbReference type="ChEBI" id="CHEBI:29991"/>
    </ligand>
</feature>
<feature type="binding site" evidence="1">
    <location>
        <position position="104"/>
    </location>
    <ligand>
        <name>carbamoyl phosphate</name>
        <dbReference type="ChEBI" id="CHEBI:58228"/>
    </ligand>
</feature>
<feature type="binding site" evidence="1">
    <location>
        <position position="132"/>
    </location>
    <ligand>
        <name>carbamoyl phosphate</name>
        <dbReference type="ChEBI" id="CHEBI:58228"/>
    </ligand>
</feature>
<feature type="binding site" evidence="1">
    <location>
        <position position="135"/>
    </location>
    <ligand>
        <name>carbamoyl phosphate</name>
        <dbReference type="ChEBI" id="CHEBI:58228"/>
    </ligand>
</feature>
<feature type="binding site" evidence="1">
    <location>
        <position position="165"/>
    </location>
    <ligand>
        <name>L-aspartate</name>
        <dbReference type="ChEBI" id="CHEBI:29991"/>
    </ligand>
</feature>
<feature type="binding site" evidence="1">
    <location>
        <position position="227"/>
    </location>
    <ligand>
        <name>L-aspartate</name>
        <dbReference type="ChEBI" id="CHEBI:29991"/>
    </ligand>
</feature>
<feature type="binding site" evidence="1">
    <location>
        <position position="266"/>
    </location>
    <ligand>
        <name>carbamoyl phosphate</name>
        <dbReference type="ChEBI" id="CHEBI:58228"/>
    </ligand>
</feature>
<feature type="binding site" evidence="1">
    <location>
        <position position="267"/>
    </location>
    <ligand>
        <name>carbamoyl phosphate</name>
        <dbReference type="ChEBI" id="CHEBI:58228"/>
    </ligand>
</feature>
<protein>
    <recommendedName>
        <fullName evidence="1">Aspartate carbamoyltransferase catalytic subunit</fullName>
        <ecNumber evidence="1">2.1.3.2</ecNumber>
    </recommendedName>
    <alternativeName>
        <fullName evidence="1">Aspartate transcarbamylase</fullName>
        <shortName evidence="1">ATCase</shortName>
    </alternativeName>
</protein>
<comment type="function">
    <text evidence="1">Catalyzes the condensation of carbamoyl phosphate and aspartate to form carbamoyl aspartate and inorganic phosphate, the committed step in the de novo pyrimidine nucleotide biosynthesis pathway.</text>
</comment>
<comment type="catalytic activity">
    <reaction evidence="1">
        <text>carbamoyl phosphate + L-aspartate = N-carbamoyl-L-aspartate + phosphate + H(+)</text>
        <dbReference type="Rhea" id="RHEA:20013"/>
        <dbReference type="ChEBI" id="CHEBI:15378"/>
        <dbReference type="ChEBI" id="CHEBI:29991"/>
        <dbReference type="ChEBI" id="CHEBI:32814"/>
        <dbReference type="ChEBI" id="CHEBI:43474"/>
        <dbReference type="ChEBI" id="CHEBI:58228"/>
        <dbReference type="EC" id="2.1.3.2"/>
    </reaction>
</comment>
<comment type="pathway">
    <text evidence="1">Pyrimidine metabolism; UMP biosynthesis via de novo pathway; (S)-dihydroorotate from bicarbonate: step 2/3.</text>
</comment>
<comment type="subunit">
    <text evidence="1">Heterododecamer (2C3:3R2) of six catalytic PyrB chains organized as two trimers (C3), and six regulatory PyrI chains organized as three dimers (R2).</text>
</comment>
<comment type="similarity">
    <text evidence="1">Belongs to the aspartate/ornithine carbamoyltransferase superfamily. ATCase family.</text>
</comment>
<reference key="1">
    <citation type="journal article" date="2008" name="DNA Res.">
        <title>Complete genome sequence of Finegoldia magna, an anaerobic opportunistic pathogen.</title>
        <authorList>
            <person name="Goto T."/>
            <person name="Yamashita A."/>
            <person name="Hirakawa H."/>
            <person name="Matsutani M."/>
            <person name="Todo K."/>
            <person name="Ohshima K."/>
            <person name="Toh H."/>
            <person name="Miyamoto K."/>
            <person name="Kuhara S."/>
            <person name="Hattori M."/>
            <person name="Shimizu T."/>
            <person name="Akimoto S."/>
        </authorList>
    </citation>
    <scope>NUCLEOTIDE SEQUENCE [LARGE SCALE GENOMIC DNA]</scope>
    <source>
        <strain>ATCC 29328 / DSM 20472 / WAL 2508</strain>
    </source>
</reference>
<name>PYRB_FINM2</name>
<dbReference type="EC" id="2.1.3.2" evidence="1"/>
<dbReference type="EMBL" id="AP008971">
    <property type="protein sequence ID" value="BAG08138.1"/>
    <property type="molecule type" value="Genomic_DNA"/>
</dbReference>
<dbReference type="RefSeq" id="WP_002841720.1">
    <property type="nucleotide sequence ID" value="NC_010376.1"/>
</dbReference>
<dbReference type="SMR" id="B0S198"/>
<dbReference type="STRING" id="334413.FMG_0720"/>
<dbReference type="KEGG" id="fma:FMG_0720"/>
<dbReference type="eggNOG" id="COG0540">
    <property type="taxonomic scope" value="Bacteria"/>
</dbReference>
<dbReference type="HOGENOM" id="CLU_043846_1_2_9"/>
<dbReference type="UniPathway" id="UPA00070">
    <property type="reaction ID" value="UER00116"/>
</dbReference>
<dbReference type="Proteomes" id="UP000001319">
    <property type="component" value="Chromosome"/>
</dbReference>
<dbReference type="GO" id="GO:0016597">
    <property type="term" value="F:amino acid binding"/>
    <property type="evidence" value="ECO:0007669"/>
    <property type="project" value="InterPro"/>
</dbReference>
<dbReference type="GO" id="GO:0004070">
    <property type="term" value="F:aspartate carbamoyltransferase activity"/>
    <property type="evidence" value="ECO:0007669"/>
    <property type="project" value="UniProtKB-UniRule"/>
</dbReference>
<dbReference type="GO" id="GO:0006207">
    <property type="term" value="P:'de novo' pyrimidine nucleobase biosynthetic process"/>
    <property type="evidence" value="ECO:0007669"/>
    <property type="project" value="InterPro"/>
</dbReference>
<dbReference type="GO" id="GO:0044205">
    <property type="term" value="P:'de novo' UMP biosynthetic process"/>
    <property type="evidence" value="ECO:0007669"/>
    <property type="project" value="UniProtKB-UniRule"/>
</dbReference>
<dbReference type="GO" id="GO:0006520">
    <property type="term" value="P:amino acid metabolic process"/>
    <property type="evidence" value="ECO:0007669"/>
    <property type="project" value="InterPro"/>
</dbReference>
<dbReference type="FunFam" id="3.40.50.1370:FF:000002">
    <property type="entry name" value="Aspartate carbamoyltransferase 2"/>
    <property type="match status" value="1"/>
</dbReference>
<dbReference type="Gene3D" id="3.40.50.1370">
    <property type="entry name" value="Aspartate/ornithine carbamoyltransferase"/>
    <property type="match status" value="2"/>
</dbReference>
<dbReference type="HAMAP" id="MF_00001">
    <property type="entry name" value="Asp_carb_tr"/>
    <property type="match status" value="1"/>
</dbReference>
<dbReference type="InterPro" id="IPR006132">
    <property type="entry name" value="Asp/Orn_carbamoyltranf_P-bd"/>
</dbReference>
<dbReference type="InterPro" id="IPR006130">
    <property type="entry name" value="Asp/Orn_carbamoylTrfase"/>
</dbReference>
<dbReference type="InterPro" id="IPR036901">
    <property type="entry name" value="Asp/Orn_carbamoylTrfase_sf"/>
</dbReference>
<dbReference type="InterPro" id="IPR002082">
    <property type="entry name" value="Asp_carbamoyltransf"/>
</dbReference>
<dbReference type="InterPro" id="IPR006131">
    <property type="entry name" value="Asp_carbamoyltransf_Asp/Orn-bd"/>
</dbReference>
<dbReference type="NCBIfam" id="TIGR00670">
    <property type="entry name" value="asp_carb_tr"/>
    <property type="match status" value="1"/>
</dbReference>
<dbReference type="NCBIfam" id="NF002032">
    <property type="entry name" value="PRK00856.1"/>
    <property type="match status" value="1"/>
</dbReference>
<dbReference type="PANTHER" id="PTHR45753:SF6">
    <property type="entry name" value="ASPARTATE CARBAMOYLTRANSFERASE"/>
    <property type="match status" value="1"/>
</dbReference>
<dbReference type="PANTHER" id="PTHR45753">
    <property type="entry name" value="ORNITHINE CARBAMOYLTRANSFERASE, MITOCHONDRIAL"/>
    <property type="match status" value="1"/>
</dbReference>
<dbReference type="Pfam" id="PF00185">
    <property type="entry name" value="OTCace"/>
    <property type="match status" value="1"/>
</dbReference>
<dbReference type="Pfam" id="PF02729">
    <property type="entry name" value="OTCace_N"/>
    <property type="match status" value="1"/>
</dbReference>
<dbReference type="PRINTS" id="PR00100">
    <property type="entry name" value="AOTCASE"/>
</dbReference>
<dbReference type="PRINTS" id="PR00101">
    <property type="entry name" value="ATCASE"/>
</dbReference>
<dbReference type="SUPFAM" id="SSF53671">
    <property type="entry name" value="Aspartate/ornithine carbamoyltransferase"/>
    <property type="match status" value="1"/>
</dbReference>
<dbReference type="PROSITE" id="PS00097">
    <property type="entry name" value="CARBAMOYLTRANSFERASE"/>
    <property type="match status" value="1"/>
</dbReference>
<evidence type="ECO:0000255" key="1">
    <source>
        <dbReference type="HAMAP-Rule" id="MF_00001"/>
    </source>
</evidence>
<sequence length="306" mass="34568">MLKNRNLINADDFNVEEINEILNLAEEIIKSPSDFSNLCNGKILGTLFFEPSTRTRLSFESAIHRLGGDCIGFSESASSSTSKGESLADTIRTVSNYTDIIAMRNPKEGSAVLASSYAEVPLINAGDGGHQHPTQTLTDLLTIWMTKKKLDNMTIGLCGDLKFGRTVHSLIKAMSRYENNKFILISPEELQVPDYIKMFLKSKNIEFKEVEKMEDVIGELDVLYMTRVQKERFFNEADYVRLKDSYILDNDKMKLATEDLAVLHPLPRVNEIATEVDSDPRAVYFKQVRYGVIVRMALILKLLGVR</sequence>
<organism>
    <name type="scientific">Finegoldia magna (strain ATCC 29328 / DSM 20472 / WAL 2508)</name>
    <name type="common">Peptostreptococcus magnus</name>
    <dbReference type="NCBI Taxonomy" id="334413"/>
    <lineage>
        <taxon>Bacteria</taxon>
        <taxon>Bacillati</taxon>
        <taxon>Bacillota</taxon>
        <taxon>Tissierellia</taxon>
        <taxon>Tissierellales</taxon>
        <taxon>Peptoniphilaceae</taxon>
        <taxon>Finegoldia</taxon>
    </lineage>
</organism>
<keyword id="KW-0665">Pyrimidine biosynthesis</keyword>
<keyword id="KW-1185">Reference proteome</keyword>
<keyword id="KW-0808">Transferase</keyword>
<accession>B0S198</accession>
<proteinExistence type="inferred from homology"/>